<organism>
    <name type="scientific">Rhodococcus jostii (strain RHA1)</name>
    <dbReference type="NCBI Taxonomy" id="101510"/>
    <lineage>
        <taxon>Bacteria</taxon>
        <taxon>Bacillati</taxon>
        <taxon>Actinomycetota</taxon>
        <taxon>Actinomycetes</taxon>
        <taxon>Mycobacteriales</taxon>
        <taxon>Nocardiaceae</taxon>
        <taxon>Rhodococcus</taxon>
    </lineage>
</organism>
<dbReference type="EC" id="3.4.23.36" evidence="1"/>
<dbReference type="EMBL" id="CP000431">
    <property type="protein sequence ID" value="ABG92900.1"/>
    <property type="molecule type" value="Genomic_DNA"/>
</dbReference>
<dbReference type="RefSeq" id="WP_009473722.1">
    <property type="nucleotide sequence ID" value="NC_008268.1"/>
</dbReference>
<dbReference type="SMR" id="Q0SHT6"/>
<dbReference type="KEGG" id="rha:RHA1_ro01073"/>
<dbReference type="eggNOG" id="COG0597">
    <property type="taxonomic scope" value="Bacteria"/>
</dbReference>
<dbReference type="HOGENOM" id="CLU_083252_2_2_11"/>
<dbReference type="UniPathway" id="UPA00665"/>
<dbReference type="Proteomes" id="UP000008710">
    <property type="component" value="Chromosome"/>
</dbReference>
<dbReference type="GO" id="GO:0005886">
    <property type="term" value="C:plasma membrane"/>
    <property type="evidence" value="ECO:0007669"/>
    <property type="project" value="UniProtKB-SubCell"/>
</dbReference>
<dbReference type="GO" id="GO:0004190">
    <property type="term" value="F:aspartic-type endopeptidase activity"/>
    <property type="evidence" value="ECO:0007669"/>
    <property type="project" value="UniProtKB-UniRule"/>
</dbReference>
<dbReference type="GO" id="GO:0006508">
    <property type="term" value="P:proteolysis"/>
    <property type="evidence" value="ECO:0007669"/>
    <property type="project" value="UniProtKB-KW"/>
</dbReference>
<dbReference type="HAMAP" id="MF_00161">
    <property type="entry name" value="LspA"/>
    <property type="match status" value="1"/>
</dbReference>
<dbReference type="InterPro" id="IPR001872">
    <property type="entry name" value="Peptidase_A8"/>
</dbReference>
<dbReference type="NCBIfam" id="TIGR00077">
    <property type="entry name" value="lspA"/>
    <property type="match status" value="1"/>
</dbReference>
<dbReference type="PANTHER" id="PTHR33695">
    <property type="entry name" value="LIPOPROTEIN SIGNAL PEPTIDASE"/>
    <property type="match status" value="1"/>
</dbReference>
<dbReference type="PANTHER" id="PTHR33695:SF1">
    <property type="entry name" value="LIPOPROTEIN SIGNAL PEPTIDASE"/>
    <property type="match status" value="1"/>
</dbReference>
<dbReference type="Pfam" id="PF01252">
    <property type="entry name" value="Peptidase_A8"/>
    <property type="match status" value="1"/>
</dbReference>
<dbReference type="PRINTS" id="PR00781">
    <property type="entry name" value="LIPOSIGPTASE"/>
</dbReference>
<dbReference type="PROSITE" id="PS00855">
    <property type="entry name" value="SPASE_II"/>
    <property type="match status" value="1"/>
</dbReference>
<gene>
    <name evidence="1" type="primary">lspA</name>
    <name type="ordered locus">RHA1_ro01073</name>
</gene>
<comment type="function">
    <text evidence="1">This protein specifically catalyzes the removal of signal peptides from prolipoproteins.</text>
</comment>
<comment type="catalytic activity">
    <reaction evidence="1">
        <text>Release of signal peptides from bacterial membrane prolipoproteins. Hydrolyzes -Xaa-Yaa-Zaa-|-(S,diacylglyceryl)Cys-, in which Xaa is hydrophobic (preferably Leu), and Yaa (Ala or Ser) and Zaa (Gly or Ala) have small, neutral side chains.</text>
        <dbReference type="EC" id="3.4.23.36"/>
    </reaction>
</comment>
<comment type="pathway">
    <text evidence="1">Protein modification; lipoprotein biosynthesis (signal peptide cleavage).</text>
</comment>
<comment type="subcellular location">
    <subcellularLocation>
        <location evidence="1">Cell membrane</location>
        <topology evidence="1">Multi-pass membrane protein</topology>
    </subcellularLocation>
</comment>
<comment type="similarity">
    <text evidence="1">Belongs to the peptidase A8 family.</text>
</comment>
<name>LSPA_RHOJR</name>
<keyword id="KW-0064">Aspartyl protease</keyword>
<keyword id="KW-1003">Cell membrane</keyword>
<keyword id="KW-0378">Hydrolase</keyword>
<keyword id="KW-0472">Membrane</keyword>
<keyword id="KW-0645">Protease</keyword>
<keyword id="KW-0812">Transmembrane</keyword>
<keyword id="KW-1133">Transmembrane helix</keyword>
<proteinExistence type="inferred from homology"/>
<feature type="chain" id="PRO_0000289416" description="Lipoprotein signal peptidase">
    <location>
        <begin position="1"/>
        <end position="198"/>
    </location>
</feature>
<feature type="transmembrane region" description="Helical" evidence="1">
    <location>
        <begin position="42"/>
        <end position="62"/>
    </location>
</feature>
<feature type="transmembrane region" description="Helical" evidence="1">
    <location>
        <begin position="92"/>
        <end position="112"/>
    </location>
</feature>
<feature type="transmembrane region" description="Helical" evidence="1">
    <location>
        <begin position="120"/>
        <end position="140"/>
    </location>
</feature>
<feature type="transmembrane region" description="Helical" evidence="1">
    <location>
        <begin position="167"/>
        <end position="187"/>
    </location>
</feature>
<feature type="region of interest" description="Disordered" evidence="2">
    <location>
        <begin position="1"/>
        <end position="34"/>
    </location>
</feature>
<feature type="compositionally biased region" description="Acidic residues" evidence="2">
    <location>
        <begin position="12"/>
        <end position="26"/>
    </location>
</feature>
<feature type="active site" evidence="1">
    <location>
        <position position="155"/>
    </location>
</feature>
<feature type="active site" evidence="1">
    <location>
        <position position="169"/>
    </location>
</feature>
<accession>Q0SHT6</accession>
<sequence>MDDERVSQDPTAENETDAEDRNDDDPSGSAPPQPVTHQRRLLLFVIAGVVLATDLLTKILAVANIEPGRPVWLIGDIVSLRLVRNPGAAFSMATGMTWLLTLVAVGVVIGVVRIGRTLRSPWWALGLGLVLGGALGNLVDRFFRAPGVMQGHVVDFVSVGWWPVFNVADSGIVCGAILLVVLTLIGLEPDGTRKGVEK</sequence>
<evidence type="ECO:0000255" key="1">
    <source>
        <dbReference type="HAMAP-Rule" id="MF_00161"/>
    </source>
</evidence>
<evidence type="ECO:0000256" key="2">
    <source>
        <dbReference type="SAM" id="MobiDB-lite"/>
    </source>
</evidence>
<reference key="1">
    <citation type="journal article" date="2006" name="Proc. Natl. Acad. Sci. U.S.A.">
        <title>The complete genome of Rhodococcus sp. RHA1 provides insights into a catabolic powerhouse.</title>
        <authorList>
            <person name="McLeod M.P."/>
            <person name="Warren R.L."/>
            <person name="Hsiao W.W.L."/>
            <person name="Araki N."/>
            <person name="Myhre M."/>
            <person name="Fernandes C."/>
            <person name="Miyazawa D."/>
            <person name="Wong W."/>
            <person name="Lillquist A.L."/>
            <person name="Wang D."/>
            <person name="Dosanjh M."/>
            <person name="Hara H."/>
            <person name="Petrescu A."/>
            <person name="Morin R.D."/>
            <person name="Yang G."/>
            <person name="Stott J.M."/>
            <person name="Schein J.E."/>
            <person name="Shin H."/>
            <person name="Smailus D."/>
            <person name="Siddiqui A.S."/>
            <person name="Marra M.A."/>
            <person name="Jones S.J.M."/>
            <person name="Holt R."/>
            <person name="Brinkman F.S.L."/>
            <person name="Miyauchi K."/>
            <person name="Fukuda M."/>
            <person name="Davies J.E."/>
            <person name="Mohn W.W."/>
            <person name="Eltis L.D."/>
        </authorList>
    </citation>
    <scope>NUCLEOTIDE SEQUENCE [LARGE SCALE GENOMIC DNA]</scope>
    <source>
        <strain>RHA1</strain>
    </source>
</reference>
<protein>
    <recommendedName>
        <fullName evidence="1">Lipoprotein signal peptidase</fullName>
        <ecNumber evidence="1">3.4.23.36</ecNumber>
    </recommendedName>
    <alternativeName>
        <fullName evidence="1">Prolipoprotein signal peptidase</fullName>
    </alternativeName>
    <alternativeName>
        <fullName evidence="1">Signal peptidase II</fullName>
        <shortName evidence="1">SPase II</shortName>
    </alternativeName>
</protein>